<dbReference type="EC" id="7.1.1.-" evidence="2"/>
<dbReference type="EMBL" id="CR925677">
    <property type="protein sequence ID" value="CAI27761.1"/>
    <property type="molecule type" value="Genomic_DNA"/>
</dbReference>
<dbReference type="RefSeq" id="WP_011154989.1">
    <property type="nucleotide sequence ID" value="NC_006831.1"/>
</dbReference>
<dbReference type="SMR" id="Q5FHF7"/>
<dbReference type="KEGG" id="erg:ERGA_CDS_03090"/>
<dbReference type="HOGENOM" id="CLU_055737_7_3_5"/>
<dbReference type="OrthoDB" id="9786737at2"/>
<dbReference type="Proteomes" id="UP000000533">
    <property type="component" value="Chromosome"/>
</dbReference>
<dbReference type="GO" id="GO:0005886">
    <property type="term" value="C:plasma membrane"/>
    <property type="evidence" value="ECO:0007669"/>
    <property type="project" value="UniProtKB-SubCell"/>
</dbReference>
<dbReference type="GO" id="GO:0045271">
    <property type="term" value="C:respiratory chain complex I"/>
    <property type="evidence" value="ECO:0007669"/>
    <property type="project" value="TreeGrafter"/>
</dbReference>
<dbReference type="GO" id="GO:0051539">
    <property type="term" value="F:4 iron, 4 sulfur cluster binding"/>
    <property type="evidence" value="ECO:0007669"/>
    <property type="project" value="UniProtKB-KW"/>
</dbReference>
<dbReference type="GO" id="GO:0005506">
    <property type="term" value="F:iron ion binding"/>
    <property type="evidence" value="ECO:0007669"/>
    <property type="project" value="UniProtKB-UniRule"/>
</dbReference>
<dbReference type="GO" id="GO:0008137">
    <property type="term" value="F:NADH dehydrogenase (ubiquinone) activity"/>
    <property type="evidence" value="ECO:0007669"/>
    <property type="project" value="InterPro"/>
</dbReference>
<dbReference type="GO" id="GO:0050136">
    <property type="term" value="F:NADH:ubiquinone reductase (non-electrogenic) activity"/>
    <property type="evidence" value="ECO:0007669"/>
    <property type="project" value="UniProtKB-UniRule"/>
</dbReference>
<dbReference type="GO" id="GO:0048038">
    <property type="term" value="F:quinone binding"/>
    <property type="evidence" value="ECO:0007669"/>
    <property type="project" value="UniProtKB-KW"/>
</dbReference>
<dbReference type="GO" id="GO:0009060">
    <property type="term" value="P:aerobic respiration"/>
    <property type="evidence" value="ECO:0007669"/>
    <property type="project" value="TreeGrafter"/>
</dbReference>
<dbReference type="GO" id="GO:0015990">
    <property type="term" value="P:electron transport coupled proton transport"/>
    <property type="evidence" value="ECO:0007669"/>
    <property type="project" value="TreeGrafter"/>
</dbReference>
<dbReference type="GO" id="GO:0032981">
    <property type="term" value="P:mitochondrial respiratory chain complex I assembly"/>
    <property type="evidence" value="ECO:0007669"/>
    <property type="project" value="TreeGrafter"/>
</dbReference>
<dbReference type="FunFam" id="3.40.50.12280:FF:000001">
    <property type="entry name" value="NADH-quinone oxidoreductase subunit B 2"/>
    <property type="match status" value="1"/>
</dbReference>
<dbReference type="Gene3D" id="3.40.50.12280">
    <property type="match status" value="1"/>
</dbReference>
<dbReference type="HAMAP" id="MF_01356">
    <property type="entry name" value="NDH1_NuoB"/>
    <property type="match status" value="1"/>
</dbReference>
<dbReference type="InterPro" id="IPR006137">
    <property type="entry name" value="NADH_UbQ_OxRdtase-like_20kDa"/>
</dbReference>
<dbReference type="InterPro" id="IPR006138">
    <property type="entry name" value="NADH_UQ_OxRdtase_20Kd_su"/>
</dbReference>
<dbReference type="NCBIfam" id="TIGR01957">
    <property type="entry name" value="nuoB_fam"/>
    <property type="match status" value="1"/>
</dbReference>
<dbReference type="NCBIfam" id="NF005012">
    <property type="entry name" value="PRK06411.1"/>
    <property type="match status" value="1"/>
</dbReference>
<dbReference type="PANTHER" id="PTHR11995">
    <property type="entry name" value="NADH DEHYDROGENASE"/>
    <property type="match status" value="1"/>
</dbReference>
<dbReference type="PANTHER" id="PTHR11995:SF14">
    <property type="entry name" value="NADH DEHYDROGENASE [UBIQUINONE] IRON-SULFUR PROTEIN 7, MITOCHONDRIAL"/>
    <property type="match status" value="1"/>
</dbReference>
<dbReference type="Pfam" id="PF01058">
    <property type="entry name" value="Oxidored_q6"/>
    <property type="match status" value="1"/>
</dbReference>
<dbReference type="SUPFAM" id="SSF56770">
    <property type="entry name" value="HydA/Nqo6-like"/>
    <property type="match status" value="1"/>
</dbReference>
<dbReference type="PROSITE" id="PS01150">
    <property type="entry name" value="COMPLEX1_20K"/>
    <property type="match status" value="1"/>
</dbReference>
<evidence type="ECO:0000250" key="1"/>
<evidence type="ECO:0000255" key="2">
    <source>
        <dbReference type="HAMAP-Rule" id="MF_01356"/>
    </source>
</evidence>
<name>NUOB_EHRRG</name>
<protein>
    <recommendedName>
        <fullName evidence="2">NADH-quinone oxidoreductase subunit B</fullName>
        <ecNumber evidence="2">7.1.1.-</ecNumber>
    </recommendedName>
    <alternativeName>
        <fullName evidence="2">NADH dehydrogenase I subunit B</fullName>
    </alternativeName>
    <alternativeName>
        <fullName evidence="2">NDH-1 subunit B</fullName>
    </alternativeName>
</protein>
<proteinExistence type="inferred from homology"/>
<comment type="function">
    <text evidence="1">NDH-1 shuttles electrons from NADH, via FMN and iron-sulfur (Fe-S) centers, to quinones in the respiratory chain. Couples the redox reaction to proton translocation (for every two electrons transferred, four hydrogen ions are translocated across the cytoplasmic membrane), and thus conserves the redox energy in a proton gradient (By similarity).</text>
</comment>
<comment type="catalytic activity">
    <reaction evidence="2">
        <text>a quinone + NADH + 5 H(+)(in) = a quinol + NAD(+) + 4 H(+)(out)</text>
        <dbReference type="Rhea" id="RHEA:57888"/>
        <dbReference type="ChEBI" id="CHEBI:15378"/>
        <dbReference type="ChEBI" id="CHEBI:24646"/>
        <dbReference type="ChEBI" id="CHEBI:57540"/>
        <dbReference type="ChEBI" id="CHEBI:57945"/>
        <dbReference type="ChEBI" id="CHEBI:132124"/>
    </reaction>
</comment>
<comment type="cofactor">
    <cofactor evidence="2">
        <name>[4Fe-4S] cluster</name>
        <dbReference type="ChEBI" id="CHEBI:49883"/>
    </cofactor>
    <text evidence="2">Binds 1 [4Fe-4S] cluster.</text>
</comment>
<comment type="subunit">
    <text evidence="2">NDH-1 is composed of 14 different subunits. Subunits NuoB, C, D, E, F, and G constitute the peripheral sector of the complex.</text>
</comment>
<comment type="subcellular location">
    <subcellularLocation>
        <location evidence="2">Cell inner membrane</location>
        <topology evidence="2">Peripheral membrane protein</topology>
        <orientation evidence="2">Cytoplasmic side</orientation>
    </subcellularLocation>
</comment>
<comment type="similarity">
    <text evidence="2">Belongs to the complex I 20 kDa subunit family.</text>
</comment>
<accession>Q5FHF7</accession>
<keyword id="KW-0004">4Fe-4S</keyword>
<keyword id="KW-0997">Cell inner membrane</keyword>
<keyword id="KW-1003">Cell membrane</keyword>
<keyword id="KW-0408">Iron</keyword>
<keyword id="KW-0411">Iron-sulfur</keyword>
<keyword id="KW-0472">Membrane</keyword>
<keyword id="KW-0479">Metal-binding</keyword>
<keyword id="KW-0520">NAD</keyword>
<keyword id="KW-0874">Quinone</keyword>
<keyword id="KW-1278">Translocase</keyword>
<keyword id="KW-0813">Transport</keyword>
<keyword id="KW-0830">Ubiquinone</keyword>
<reference key="1">
    <citation type="journal article" date="2006" name="J. Bacteriol.">
        <title>Comparative genomic analysis of three strains of Ehrlichia ruminantium reveals an active process of genome size plasticity.</title>
        <authorList>
            <person name="Frutos R."/>
            <person name="Viari A."/>
            <person name="Ferraz C."/>
            <person name="Morgat A."/>
            <person name="Eychenie S."/>
            <person name="Kandassamy Y."/>
            <person name="Chantal I."/>
            <person name="Bensaid A."/>
            <person name="Coissac E."/>
            <person name="Vachiery N."/>
            <person name="Demaille J."/>
            <person name="Martinez D."/>
        </authorList>
    </citation>
    <scope>NUCLEOTIDE SEQUENCE [LARGE SCALE GENOMIC DNA]</scope>
    <source>
        <strain>Gardel</strain>
    </source>
</reference>
<sequence length="172" mass="19345">MINKHNSVLHNQFWQSYNHRGFMVTKLSDLMSYVSSWARSNSLWPMTFGLACCAVEMMHTAASKYDLDRYGIMFRASPRQADVMIVAGTLTNKMAPALRKVYDQMTEPRYVISMGSCANGGGYYHYSYSVVRGCDRIVPVDIYVPGCPPTAEALLYGILCLQQKINRTATST</sequence>
<organism>
    <name type="scientific">Ehrlichia ruminantium (strain Gardel)</name>
    <dbReference type="NCBI Taxonomy" id="302409"/>
    <lineage>
        <taxon>Bacteria</taxon>
        <taxon>Pseudomonadati</taxon>
        <taxon>Pseudomonadota</taxon>
        <taxon>Alphaproteobacteria</taxon>
        <taxon>Rickettsiales</taxon>
        <taxon>Anaplasmataceae</taxon>
        <taxon>Ehrlichia</taxon>
    </lineage>
</organism>
<gene>
    <name evidence="2" type="primary">nuoB</name>
    <name type="ordered locus">ERGA_CDS_03090</name>
</gene>
<feature type="chain" id="PRO_0000358405" description="NADH-quinone oxidoreductase subunit B">
    <location>
        <begin position="1"/>
        <end position="172"/>
    </location>
</feature>
<feature type="binding site" evidence="2">
    <location>
        <position position="52"/>
    </location>
    <ligand>
        <name>[4Fe-4S] cluster</name>
        <dbReference type="ChEBI" id="CHEBI:49883"/>
    </ligand>
</feature>
<feature type="binding site" evidence="2">
    <location>
        <position position="53"/>
    </location>
    <ligand>
        <name>[4Fe-4S] cluster</name>
        <dbReference type="ChEBI" id="CHEBI:49883"/>
    </ligand>
</feature>
<feature type="binding site" evidence="2">
    <location>
        <position position="117"/>
    </location>
    <ligand>
        <name>[4Fe-4S] cluster</name>
        <dbReference type="ChEBI" id="CHEBI:49883"/>
    </ligand>
</feature>
<feature type="binding site" evidence="2">
    <location>
        <position position="147"/>
    </location>
    <ligand>
        <name>[4Fe-4S] cluster</name>
        <dbReference type="ChEBI" id="CHEBI:49883"/>
    </ligand>
</feature>